<gene>
    <name type="primary">isdG</name>
    <name type="ordered locus">SE_1764</name>
</gene>
<organism>
    <name type="scientific">Staphylococcus epidermidis (strain ATCC 12228 / FDA PCI 1200)</name>
    <dbReference type="NCBI Taxonomy" id="176280"/>
    <lineage>
        <taxon>Bacteria</taxon>
        <taxon>Bacillati</taxon>
        <taxon>Bacillota</taxon>
        <taxon>Bacilli</taxon>
        <taxon>Bacillales</taxon>
        <taxon>Staphylococcaceae</taxon>
        <taxon>Staphylococcus</taxon>
    </lineage>
</organism>
<sequence length="104" mass="12023">MFVVTNRITVKKGYAKQMAPNFTKGGPIESLKGFEGIEVWQIDKDDYSEDMYVNSWWETEEDFKNWVNSDVFKQAHKNTGKSEDSPVIKSEIVKSNVLSSLNRR</sequence>
<comment type="function">
    <text evidence="1">Allows bacterial pathogens to use the host heme as an iron source. Catalyzes the oxidative degradation of the heme macrocyclic porphyrin ring to the oxo-bilirubin chromophore staphylobilin (a mixture of the linear tetrapyrroles 5-oxo-delta-bilirubin and 15-oxo-beta-bilirubin) in the presence of a suitable electron donor such as ascorbate or NADPH--cytochrome P450 reductase, with subsequent release of free iron.</text>
</comment>
<comment type="catalytic activity">
    <reaction evidence="1">
        <text>heme b + 5 AH2 + 4 O2 + 2 H(+) = delta-staphylobilin + Fe(2+) + formaldehyde + 5 A + 4 H2O</text>
        <dbReference type="Rhea" id="RHEA:37039"/>
        <dbReference type="ChEBI" id="CHEBI:13193"/>
        <dbReference type="ChEBI" id="CHEBI:15377"/>
        <dbReference type="ChEBI" id="CHEBI:15378"/>
        <dbReference type="ChEBI" id="CHEBI:15379"/>
        <dbReference type="ChEBI" id="CHEBI:16842"/>
        <dbReference type="ChEBI" id="CHEBI:17499"/>
        <dbReference type="ChEBI" id="CHEBI:29033"/>
        <dbReference type="ChEBI" id="CHEBI:60344"/>
        <dbReference type="ChEBI" id="CHEBI:74361"/>
        <dbReference type="EC" id="1.14.99.48"/>
    </reaction>
</comment>
<comment type="catalytic activity">
    <reaction evidence="1">
        <text>heme b + 5 AH2 + 4 O2 + 2 H(+) = beta-staphylobilin + Fe(2+) + formaldehyde + 5 A + 4 H2O</text>
        <dbReference type="Rhea" id="RHEA:37363"/>
        <dbReference type="ChEBI" id="CHEBI:13193"/>
        <dbReference type="ChEBI" id="CHEBI:15377"/>
        <dbReference type="ChEBI" id="CHEBI:15378"/>
        <dbReference type="ChEBI" id="CHEBI:15379"/>
        <dbReference type="ChEBI" id="CHEBI:16842"/>
        <dbReference type="ChEBI" id="CHEBI:17499"/>
        <dbReference type="ChEBI" id="CHEBI:29033"/>
        <dbReference type="ChEBI" id="CHEBI:60344"/>
        <dbReference type="ChEBI" id="CHEBI:74362"/>
        <dbReference type="EC" id="1.14.99.48"/>
    </reaction>
</comment>
<comment type="subunit">
    <text evidence="1">Homodimer.</text>
</comment>
<comment type="subcellular location">
    <subcellularLocation>
        <location evidence="1">Cytoplasm</location>
    </subcellularLocation>
</comment>
<comment type="similarity">
    <text evidence="1">Belongs to the antibiotic biosynthesis monooxygenase family. Heme-degrading monooxygenase IsdG subfamily.</text>
</comment>
<accession>Q8CRK4</accession>
<dbReference type="EC" id="1.14.99.48" evidence="1"/>
<dbReference type="EMBL" id="AE015929">
    <property type="protein sequence ID" value="AAO05405.1"/>
    <property type="molecule type" value="Genomic_DNA"/>
</dbReference>
<dbReference type="RefSeq" id="NP_765319.1">
    <property type="nucleotide sequence ID" value="NC_004461.1"/>
</dbReference>
<dbReference type="RefSeq" id="WP_001829739.1">
    <property type="nucleotide sequence ID" value="NZ_WBME01000007.1"/>
</dbReference>
<dbReference type="SMR" id="Q8CRK4"/>
<dbReference type="KEGG" id="sep:SE_1764"/>
<dbReference type="PATRIC" id="fig|176280.10.peg.1722"/>
<dbReference type="eggNOG" id="COG2329">
    <property type="taxonomic scope" value="Bacteria"/>
</dbReference>
<dbReference type="HOGENOM" id="CLU_141544_2_1_9"/>
<dbReference type="OrthoDB" id="384737at2"/>
<dbReference type="Proteomes" id="UP000001411">
    <property type="component" value="Chromosome"/>
</dbReference>
<dbReference type="GO" id="GO:0005737">
    <property type="term" value="C:cytoplasm"/>
    <property type="evidence" value="ECO:0007669"/>
    <property type="project" value="UniProtKB-SubCell"/>
</dbReference>
<dbReference type="GO" id="GO:0020037">
    <property type="term" value="F:heme binding"/>
    <property type="evidence" value="ECO:0007669"/>
    <property type="project" value="UniProtKB-UniRule"/>
</dbReference>
<dbReference type="GO" id="GO:0004392">
    <property type="term" value="F:heme oxygenase (decyclizing) activity"/>
    <property type="evidence" value="ECO:0007669"/>
    <property type="project" value="UniProtKB-UniRule"/>
</dbReference>
<dbReference type="GO" id="GO:0005506">
    <property type="term" value="F:iron ion binding"/>
    <property type="evidence" value="ECO:0007669"/>
    <property type="project" value="UniProtKB-UniRule"/>
</dbReference>
<dbReference type="GO" id="GO:0042167">
    <property type="term" value="P:heme catabolic process"/>
    <property type="evidence" value="ECO:0007669"/>
    <property type="project" value="UniProtKB-UniRule"/>
</dbReference>
<dbReference type="GO" id="GO:0033212">
    <property type="term" value="P:iron import into cell"/>
    <property type="evidence" value="ECO:0007669"/>
    <property type="project" value="InterPro"/>
</dbReference>
<dbReference type="Gene3D" id="3.30.70.100">
    <property type="match status" value="1"/>
</dbReference>
<dbReference type="HAMAP" id="MF_01272">
    <property type="entry name" value="Heme_degrading_monooxygenase"/>
    <property type="match status" value="1"/>
</dbReference>
<dbReference type="InterPro" id="IPR007138">
    <property type="entry name" value="ABM_dom"/>
</dbReference>
<dbReference type="InterPro" id="IPR011008">
    <property type="entry name" value="Dimeric_a/b-barrel"/>
</dbReference>
<dbReference type="InterPro" id="IPR050404">
    <property type="entry name" value="Heme-degrading_MO"/>
</dbReference>
<dbReference type="InterPro" id="IPR023953">
    <property type="entry name" value="IsdG"/>
</dbReference>
<dbReference type="NCBIfam" id="NF009840">
    <property type="entry name" value="PRK13315.1"/>
    <property type="match status" value="1"/>
</dbReference>
<dbReference type="PANTHER" id="PTHR34474:SF4">
    <property type="entry name" value="HEME OXYGENASE (STAPHYLOBILIN-PRODUCING) 1"/>
    <property type="match status" value="1"/>
</dbReference>
<dbReference type="PANTHER" id="PTHR34474">
    <property type="entry name" value="SIGNAL TRANSDUCTION PROTEIN TRAP"/>
    <property type="match status" value="1"/>
</dbReference>
<dbReference type="Pfam" id="PF03992">
    <property type="entry name" value="ABM"/>
    <property type="match status" value="1"/>
</dbReference>
<dbReference type="SUPFAM" id="SSF54909">
    <property type="entry name" value="Dimeric alpha+beta barrel"/>
    <property type="match status" value="1"/>
</dbReference>
<dbReference type="PROSITE" id="PS51725">
    <property type="entry name" value="ABM"/>
    <property type="match status" value="1"/>
</dbReference>
<protein>
    <recommendedName>
        <fullName evidence="1">Heme oxygenase (staphylobilin-producing)</fullName>
        <ecNumber evidence="1">1.14.99.48</ecNumber>
    </recommendedName>
    <alternativeName>
        <fullName evidence="1">Heme-degrading monooxygenase</fullName>
    </alternativeName>
    <alternativeName>
        <fullName evidence="1">Iron-regulated surface determinant</fullName>
    </alternativeName>
    <alternativeName>
        <fullName evidence="1">Iron-responsive surface determinant</fullName>
    </alternativeName>
</protein>
<name>HDOX_STAES</name>
<evidence type="ECO:0000255" key="1">
    <source>
        <dbReference type="HAMAP-Rule" id="MF_01272"/>
    </source>
</evidence>
<keyword id="KW-0963">Cytoplasm</keyword>
<keyword id="KW-0349">Heme</keyword>
<keyword id="KW-0408">Iron</keyword>
<keyword id="KW-0479">Metal-binding</keyword>
<keyword id="KW-0503">Monooxygenase</keyword>
<keyword id="KW-0560">Oxidoreductase</keyword>
<proteinExistence type="inferred from homology"/>
<reference key="1">
    <citation type="journal article" date="2003" name="Mol. Microbiol.">
        <title>Genome-based analysis of virulence genes in a non-biofilm-forming Staphylococcus epidermidis strain (ATCC 12228).</title>
        <authorList>
            <person name="Zhang Y.-Q."/>
            <person name="Ren S.-X."/>
            <person name="Li H.-L."/>
            <person name="Wang Y.-X."/>
            <person name="Fu G."/>
            <person name="Yang J."/>
            <person name="Qin Z.-Q."/>
            <person name="Miao Y.-G."/>
            <person name="Wang W.-Y."/>
            <person name="Chen R.-S."/>
            <person name="Shen Y."/>
            <person name="Chen Z."/>
            <person name="Yuan Z.-H."/>
            <person name="Zhao G.-P."/>
            <person name="Qu D."/>
            <person name="Danchin A."/>
            <person name="Wen Y.-M."/>
        </authorList>
    </citation>
    <scope>NUCLEOTIDE SEQUENCE [LARGE SCALE GENOMIC DNA]</scope>
    <source>
        <strain>ATCC 12228 / FDA PCI 1200</strain>
    </source>
</reference>
<feature type="chain" id="PRO_0000270097" description="Heme oxygenase (staphylobilin-producing)">
    <location>
        <begin position="1"/>
        <end position="104"/>
    </location>
</feature>
<feature type="domain" description="ABM" evidence="1">
    <location>
        <begin position="2"/>
        <end position="92"/>
    </location>
</feature>
<feature type="binding site" evidence="1">
    <location>
        <position position="6"/>
    </location>
    <ligand>
        <name>Fe cation</name>
        <dbReference type="ChEBI" id="CHEBI:24875"/>
    </ligand>
</feature>
<feature type="binding site" description="axial binding residue" evidence="1">
    <location>
        <position position="76"/>
    </location>
    <ligand>
        <name>heme</name>
        <dbReference type="ChEBI" id="CHEBI:30413"/>
    </ligand>
    <ligandPart>
        <name>Fe</name>
        <dbReference type="ChEBI" id="CHEBI:18248"/>
    </ligandPart>
</feature>
<feature type="site" description="Transition state stabilizer" evidence="1">
    <location>
        <position position="66"/>
    </location>
</feature>